<protein>
    <recommendedName>
        <fullName>Peroxynitrite isomerase</fullName>
        <ecNumber evidence="1">5.99.-.-</ecNumber>
    </recommendedName>
    <alternativeName>
        <fullName>Ferric nitrobindin</fullName>
        <shortName>Nb(III)</shortName>
    </alternativeName>
</protein>
<evidence type="ECO:0000255" key="1">
    <source>
        <dbReference type="HAMAP-Rule" id="MF_01297"/>
    </source>
</evidence>
<name>NB_KOCRD</name>
<dbReference type="EC" id="5.99.-.-" evidence="1"/>
<dbReference type="EMBL" id="AP009152">
    <property type="protein sequence ID" value="BAG28922.1"/>
    <property type="molecule type" value="Genomic_DNA"/>
</dbReference>
<dbReference type="RefSeq" id="WP_012397648.1">
    <property type="nucleotide sequence ID" value="NZ_VECX01000001.1"/>
</dbReference>
<dbReference type="SMR" id="B2GIH3"/>
<dbReference type="STRING" id="378753.KRH_05750"/>
<dbReference type="KEGG" id="krh:KRH_05750"/>
<dbReference type="eggNOG" id="COG3485">
    <property type="taxonomic scope" value="Bacteria"/>
</dbReference>
<dbReference type="HOGENOM" id="CLU_085483_0_1_11"/>
<dbReference type="OrthoDB" id="4804006at2"/>
<dbReference type="Proteomes" id="UP000008838">
    <property type="component" value="Chromosome"/>
</dbReference>
<dbReference type="GO" id="GO:0020037">
    <property type="term" value="F:heme binding"/>
    <property type="evidence" value="ECO:0007669"/>
    <property type="project" value="UniProtKB-UniRule"/>
</dbReference>
<dbReference type="GO" id="GO:0046872">
    <property type="term" value="F:metal ion binding"/>
    <property type="evidence" value="ECO:0007669"/>
    <property type="project" value="UniProtKB-KW"/>
</dbReference>
<dbReference type="GO" id="GO:0062213">
    <property type="term" value="F:peroxynitrite isomerase activity"/>
    <property type="evidence" value="ECO:0007669"/>
    <property type="project" value="UniProtKB-UniRule"/>
</dbReference>
<dbReference type="CDD" id="cd07828">
    <property type="entry name" value="lipocalin_heme-bd-THAP4-like"/>
    <property type="match status" value="1"/>
</dbReference>
<dbReference type="Gene3D" id="2.40.128.20">
    <property type="match status" value="1"/>
</dbReference>
<dbReference type="HAMAP" id="MF_01297">
    <property type="entry name" value="nitrobindin"/>
    <property type="match status" value="1"/>
</dbReference>
<dbReference type="InterPro" id="IPR012674">
    <property type="entry name" value="Calycin"/>
</dbReference>
<dbReference type="InterPro" id="IPR022939">
    <property type="entry name" value="Nb(III)_bact/plant"/>
</dbReference>
<dbReference type="InterPro" id="IPR045165">
    <property type="entry name" value="Nitrobindin"/>
</dbReference>
<dbReference type="InterPro" id="IPR014878">
    <property type="entry name" value="THAP4-like_heme-bd"/>
</dbReference>
<dbReference type="PANTHER" id="PTHR15854:SF4">
    <property type="entry name" value="PEROXYNITRITE ISOMERASE THAP4"/>
    <property type="match status" value="1"/>
</dbReference>
<dbReference type="PANTHER" id="PTHR15854">
    <property type="entry name" value="THAP4 PROTEIN"/>
    <property type="match status" value="1"/>
</dbReference>
<dbReference type="Pfam" id="PF08768">
    <property type="entry name" value="THAP4_heme-bd"/>
    <property type="match status" value="1"/>
</dbReference>
<dbReference type="SUPFAM" id="SSF50814">
    <property type="entry name" value="Lipocalins"/>
    <property type="match status" value="1"/>
</dbReference>
<accession>B2GIH3</accession>
<feature type="chain" id="PRO_0000356909" description="Peroxynitrite isomerase">
    <location>
        <begin position="1"/>
        <end position="206"/>
    </location>
</feature>
<feature type="short sequence motif" description="GXWXGXG" evidence="1">
    <location>
        <begin position="21"/>
        <end position="27"/>
    </location>
</feature>
<feature type="binding site" description="axial binding residue" evidence="1">
    <location>
        <position position="190"/>
    </location>
    <ligand>
        <name>heme b</name>
        <dbReference type="ChEBI" id="CHEBI:60344"/>
    </ligand>
    <ligandPart>
        <name>Fe</name>
        <dbReference type="ChEBI" id="CHEBI:18248"/>
    </ligandPart>
</feature>
<comment type="function">
    <text evidence="1">Heme-binding protein able to scavenge peroxynitrite and to protect free L-tyrosine against peroxynitrite-mediated nitration, by acting as a peroxynitrite isomerase that converts peroxynitrite to nitrate. Therefore, this protein likely plays a role in peroxynitrite sensing and in the detoxification of reactive nitrogen and oxygen species (RNS and ROS, respectively). Is able to bind nitric oxide (NO) in vitro, but may act as a sensor of peroxynitrite levels in vivo.</text>
</comment>
<comment type="catalytic activity">
    <reaction evidence="1">
        <text>peroxynitrite = nitrate</text>
        <dbReference type="Rhea" id="RHEA:63116"/>
        <dbReference type="ChEBI" id="CHEBI:17632"/>
        <dbReference type="ChEBI" id="CHEBI:25941"/>
    </reaction>
    <physiologicalReaction direction="left-to-right" evidence="1">
        <dbReference type="Rhea" id="RHEA:63117"/>
    </physiologicalReaction>
</comment>
<comment type="cofactor">
    <cofactor evidence="1">
        <name>heme b</name>
        <dbReference type="ChEBI" id="CHEBI:60344"/>
    </cofactor>
    <text evidence="1">Binds 1 heme b group per subunit, that coordinates a highly solvent-exposed Fe(III) atom.</text>
</comment>
<comment type="pathway">
    <text evidence="1">Nitrogen metabolism.</text>
</comment>
<comment type="subunit">
    <text evidence="1">Homodimer.</text>
</comment>
<comment type="domain">
    <text evidence="1">Forms a 10-stranded antiparallel beta-barrel structure able to accommodate a hydrophobic ligand in its interior. In fact, this fold hosts the heme group, which is located in a wide surface cleft.</text>
</comment>
<comment type="similarity">
    <text evidence="1">Belongs to the nitrobindin family.</text>
</comment>
<organism>
    <name type="scientific">Kocuria rhizophila (strain ATCC 9341 / DSM 348 / NBRC 103217 / DC2201)</name>
    <dbReference type="NCBI Taxonomy" id="378753"/>
    <lineage>
        <taxon>Bacteria</taxon>
        <taxon>Bacillati</taxon>
        <taxon>Actinomycetota</taxon>
        <taxon>Actinomycetes</taxon>
        <taxon>Micrococcales</taxon>
        <taxon>Micrococcaceae</taxon>
        <taxon>Kocuria</taxon>
    </lineage>
</organism>
<reference key="1">
    <citation type="journal article" date="2008" name="J. Bacteriol.">
        <title>Complete genome sequence of the soil actinomycete Kocuria rhizophila.</title>
        <authorList>
            <person name="Takarada H."/>
            <person name="Sekine M."/>
            <person name="Kosugi H."/>
            <person name="Matsuo Y."/>
            <person name="Fujisawa T."/>
            <person name="Omata S."/>
            <person name="Kishi E."/>
            <person name="Shimizu A."/>
            <person name="Tsukatani N."/>
            <person name="Tanikawa S."/>
            <person name="Fujita N."/>
            <person name="Harayama S."/>
        </authorList>
    </citation>
    <scope>NUCLEOTIDE SEQUENCE [LARGE SCALE GENOMIC DNA]</scope>
    <source>
        <strain>ATCC 9341 / DSM 348 / NBRC 103217 / DC2201</strain>
    </source>
</reference>
<proteinExistence type="inferred from homology"/>
<sequence length="206" mass="22673">MPIEIPTDLTPELVPFAWLLGTWEGNGFMGYGDAEQRAFRQRVTFEQTGLPFVIYRAQTTLLDEEGEPQREATYEQGFWELARPREDGDIGPGMLPPDPVPVLTSAEDVEKLRNADGGFDISVSILQPGGVAELYLGQIKGPRVDLRTDAVIRAQGAKEYQSGTRLYGLVNNHLMWAWDMAADGRELATHASAELTRIEPAAPSGS</sequence>
<gene>
    <name type="ordered locus">KRH_05750</name>
</gene>
<keyword id="KW-0349">Heme</keyword>
<keyword id="KW-0408">Iron</keyword>
<keyword id="KW-0413">Isomerase</keyword>
<keyword id="KW-0479">Metal-binding</keyword>
<keyword id="KW-1185">Reference proteome</keyword>